<gene>
    <name type="primary">bchJ</name>
    <name type="ordered locus">RCAP_rcc00670</name>
</gene>
<protein>
    <recommendedName>
        <fullName>Bacteriochlorophyll synthase 23 kDa chain</fullName>
    </recommendedName>
    <alternativeName>
        <fullName>4-vinyl reductase</fullName>
    </alternativeName>
</protein>
<proteinExistence type="predicted"/>
<comment type="pathway">
    <text>Porphyrin-containing compound metabolism; bacteriochlorophyll biosynthesis (light-independent).</text>
</comment>
<feature type="chain" id="PRO_0000064881" description="Bacteriochlorophyll synthase 23 kDa chain">
    <location>
        <begin position="1"/>
        <end position="213"/>
    </location>
</feature>
<dbReference type="EMBL" id="Z11165">
    <property type="protein sequence ID" value="CAA77531.1"/>
    <property type="molecule type" value="Genomic_DNA"/>
</dbReference>
<dbReference type="EMBL" id="CP001312">
    <property type="protein sequence ID" value="ADE84435.1"/>
    <property type="molecule type" value="Genomic_DNA"/>
</dbReference>
<dbReference type="PIR" id="S17815">
    <property type="entry name" value="S17815"/>
</dbReference>
<dbReference type="RefSeq" id="WP_013066414.1">
    <property type="nucleotide sequence ID" value="NC_014034.1"/>
</dbReference>
<dbReference type="IntAct" id="P26169">
    <property type="interactions" value="1"/>
</dbReference>
<dbReference type="MINT" id="P26169"/>
<dbReference type="STRING" id="272942.RCAP_rcc00670"/>
<dbReference type="GeneID" id="31489616"/>
<dbReference type="KEGG" id="rcp:RCAP_rcc00670"/>
<dbReference type="eggNOG" id="COG1719">
    <property type="taxonomic scope" value="Bacteria"/>
</dbReference>
<dbReference type="HOGENOM" id="CLU_092419_0_0_5"/>
<dbReference type="OrthoDB" id="2080515at2"/>
<dbReference type="UniPathway" id="UPA00671"/>
<dbReference type="Proteomes" id="UP000002361">
    <property type="component" value="Chromosome"/>
</dbReference>
<dbReference type="GO" id="GO:0030494">
    <property type="term" value="P:bacteriochlorophyll biosynthetic process"/>
    <property type="evidence" value="ECO:0000315"/>
    <property type="project" value="CACAO"/>
</dbReference>
<dbReference type="GO" id="GO:0036070">
    <property type="term" value="P:light-independent bacteriochlorophyll biosynthetic process"/>
    <property type="evidence" value="ECO:0007669"/>
    <property type="project" value="UniProtKB-UniPathway"/>
</dbReference>
<dbReference type="GO" id="GO:0015979">
    <property type="term" value="P:photosynthesis"/>
    <property type="evidence" value="ECO:0007669"/>
    <property type="project" value="UniProtKB-KW"/>
</dbReference>
<dbReference type="InterPro" id="IPR010249">
    <property type="entry name" value="BchJ"/>
</dbReference>
<dbReference type="InterPro" id="IPR024096">
    <property type="entry name" value="NO_sig/Golgi_transp_ligand-bd"/>
</dbReference>
<dbReference type="InterPro" id="IPR004096">
    <property type="entry name" value="V4R"/>
</dbReference>
<dbReference type="NCBIfam" id="TIGR02019">
    <property type="entry name" value="BchJ"/>
    <property type="match status" value="1"/>
</dbReference>
<dbReference type="Pfam" id="PF02830">
    <property type="entry name" value="V4R"/>
    <property type="match status" value="1"/>
</dbReference>
<dbReference type="SMART" id="SM00989">
    <property type="entry name" value="V4R"/>
    <property type="match status" value="1"/>
</dbReference>
<dbReference type="SUPFAM" id="SSF111126">
    <property type="entry name" value="Ligand-binding domain in the NO signalling and Golgi transport"/>
    <property type="match status" value="1"/>
</dbReference>
<accession>P26169</accession>
<accession>D5ANT1</accession>
<name>BCHJ_RHOCB</name>
<reference key="1">
    <citation type="submission" date="1991-11" db="EMBL/GenBank/DDBJ databases">
        <authorList>
            <person name="Burke D.H."/>
            <person name="Alberti M."/>
            <person name="Armstrong G.A."/>
            <person name="Hearst J.E."/>
        </authorList>
    </citation>
    <scope>NUCLEOTIDE SEQUENCE [GENOMIC DNA]</scope>
    <source>
        <strain>ATCC BAA-309 / NBRC 16581 / SB1003</strain>
    </source>
</reference>
<reference key="2">
    <citation type="journal article" date="2010" name="J. Bacteriol.">
        <title>Complete genome sequence of the photosynthetic purple nonsulfur bacterium Rhodobacter capsulatus SB 1003.</title>
        <authorList>
            <person name="Strnad H."/>
            <person name="Lapidus A."/>
            <person name="Paces J."/>
            <person name="Ulbrich P."/>
            <person name="Vlcek C."/>
            <person name="Paces V."/>
            <person name="Haselkorn R."/>
        </authorList>
    </citation>
    <scope>NUCLEOTIDE SEQUENCE [LARGE SCALE GENOMIC DNA]</scope>
    <source>
        <strain>ATCC BAA-309 / NBRC 16581 / SB1003</strain>
    </source>
</reference>
<organism>
    <name type="scientific">Rhodobacter capsulatus (strain ATCC BAA-309 / NBRC 16581 / SB1003)</name>
    <dbReference type="NCBI Taxonomy" id="272942"/>
    <lineage>
        <taxon>Bacteria</taxon>
        <taxon>Pseudomonadati</taxon>
        <taxon>Pseudomonadota</taxon>
        <taxon>Alphaproteobacteria</taxon>
        <taxon>Rhodobacterales</taxon>
        <taxon>Rhodobacter group</taxon>
        <taxon>Rhodobacter</taxon>
    </lineage>
</organism>
<sequence>MSGAAPAPQDDEPRIGPNAILQTIGVLDRHLGRAERDRVMRLAGVPVPPPDSGMLPESQCRAVHQALRVDQGEAAEGLLWLSGLATGDYILANRIPGFAKAIIRVLPGFLGARLLAAAITKHAWTFVGSGRFRVESFRPLTFRIDDNPLRADAAERPSCFWHAAVFERLFGTLVWPEVTVEEISCASVSGGPCLFVLHPKGKKTAMPSSVHSG</sequence>
<keyword id="KW-0077">Bacteriochlorophyll biosynthesis</keyword>
<keyword id="KW-0149">Chlorophyll biosynthesis</keyword>
<keyword id="KW-0602">Photosynthesis</keyword>
<keyword id="KW-1185">Reference proteome</keyword>